<protein>
    <recommendedName>
        <fullName evidence="16">RNA-binding KH domain-containing protein RCF3</fullName>
    </recommendedName>
    <alternativeName>
        <fullName evidence="14">Protein ENHANCED STRESS RESPONSE 1</fullName>
    </alternativeName>
    <alternativeName>
        <fullName evidence="13">Protein HIGH OSMOTIC STRESS GENE EXPRESSION 5</fullName>
    </alternativeName>
    <alternativeName>
        <fullName evidence="11">Protein REGULATOR OF CBF GENE EXPRESSION 3</fullName>
    </alternativeName>
    <alternativeName>
        <fullName evidence="12">Protein SHINY 1</fullName>
    </alternativeName>
</protein>
<name>RCF3_ARATH</name>
<keyword id="KW-0025">Alternative splicing</keyword>
<keyword id="KW-0507">mRNA processing</keyword>
<keyword id="KW-0508">mRNA splicing</keyword>
<keyword id="KW-0539">Nucleus</keyword>
<keyword id="KW-1185">Reference proteome</keyword>
<keyword id="KW-0677">Repeat</keyword>
<keyword id="KW-0694">RNA-binding</keyword>
<proteinExistence type="evidence at protein level"/>
<organism>
    <name type="scientific">Arabidopsis thaliana</name>
    <name type="common">Mouse-ear cress</name>
    <dbReference type="NCBI Taxonomy" id="3702"/>
    <lineage>
        <taxon>Eukaryota</taxon>
        <taxon>Viridiplantae</taxon>
        <taxon>Streptophyta</taxon>
        <taxon>Embryophyta</taxon>
        <taxon>Tracheophyta</taxon>
        <taxon>Spermatophyta</taxon>
        <taxon>Magnoliopsida</taxon>
        <taxon>eudicotyledons</taxon>
        <taxon>Gunneridae</taxon>
        <taxon>Pentapetalae</taxon>
        <taxon>rosids</taxon>
        <taxon>malvids</taxon>
        <taxon>Brassicales</taxon>
        <taxon>Brassicaceae</taxon>
        <taxon>Camelineae</taxon>
        <taxon>Arabidopsis</taxon>
    </lineage>
</organism>
<sequence length="652" mass="71345">MERSRSKRNYHYDQDYDGDSMPRSKPRYNNNYHFGGGGGGNNRYRGGGGGGGGNGRPSKSHPETMATTTYRILCHDAKAGGVIGKSGTIIKSIRQHTGAWINVHELVPGDAERIIEISDNRRRDPDGRMPSFSPAQEALFSVHDRILESEAQFGYGGPPPEEEEDYGGVRPGGGRVVTRLVVSRMHVGCLLGKGGKIIEQMRIETKTHIRILPRESNLPRCVSLSEEIVQIVGELNAVKNALAIVSSRLRESQHRDRSNFQGRSHSPERSFAAAGDDYMPQLRRQSSDRFPRGNFRNNNFSSRQSNYAEEAPAVPVGENVYSEELVFQILCPADKIVRVVGESQGIIDLLQNEIGVDVRVSDPVAGSDEQIITISSEEAPDDPFFPAQEALLHIQTQIIDLIPDKDNLITTRLLVPSRDSICLEGKAGSVSEISRLTGTSVQILAREEIPRCASINDVVIQITGEIRAAREALVELTLLLRSHMFKELSQKETPPASTSTTGPLEGVAGVMEVASSNNTIQSREGPTSSNLNLQQVSTILPQFKEGFGSVAKAGESEHREEVPVTTSRMAVPLVTRSTLEVVLPEAVVPKLVTKSRNKLAQISEWSGASVTIVEDRPEETQNIIRISGTPEQAERAQSLLQGFILSIQEDGP</sequence>
<feature type="chain" id="PRO_0000438737" description="RNA-binding KH domain-containing protein RCF3">
    <location>
        <begin position="1"/>
        <end position="652"/>
    </location>
</feature>
<feature type="domain" description="KH 1" evidence="1">
    <location>
        <begin position="67"/>
        <end position="139"/>
    </location>
</feature>
<feature type="domain" description="KH 2" evidence="1">
    <location>
        <begin position="175"/>
        <end position="245"/>
    </location>
</feature>
<feature type="domain" description="KH 3" evidence="1">
    <location>
        <begin position="324"/>
        <end position="391"/>
    </location>
</feature>
<feature type="domain" description="KH 4" evidence="1">
    <location>
        <begin position="408"/>
        <end position="476"/>
    </location>
</feature>
<feature type="domain" description="KH 5" evidence="1">
    <location>
        <begin position="576"/>
        <end position="640"/>
    </location>
</feature>
<feature type="region of interest" description="Disordered" evidence="2">
    <location>
        <begin position="1"/>
        <end position="63"/>
    </location>
</feature>
<feature type="region of interest" description="Disordered" evidence="2">
    <location>
        <begin position="253"/>
        <end position="307"/>
    </location>
</feature>
<feature type="compositionally biased region" description="Basic and acidic residues" evidence="2">
    <location>
        <begin position="1"/>
        <end position="14"/>
    </location>
</feature>
<feature type="compositionally biased region" description="Gly residues" evidence="2">
    <location>
        <begin position="34"/>
        <end position="55"/>
    </location>
</feature>
<feature type="compositionally biased region" description="Low complexity" evidence="2">
    <location>
        <begin position="292"/>
        <end position="306"/>
    </location>
</feature>
<feature type="mutagenesis site" description="In hos5-1; increased sensitivity to salt stress." evidence="6">
    <original>G</original>
    <variation>S</variation>
    <location>
        <position position="233"/>
    </location>
</feature>
<feature type="mutagenesis site" description="In shi1; increased sensitivity to cold stress." evidence="5">
    <original>E</original>
    <variation>K</variation>
    <location>
        <position position="389"/>
    </location>
</feature>
<dbReference type="EMBL" id="AB018116">
    <property type="protein sequence ID" value="BAA97146.1"/>
    <property type="status" value="ALT_SEQ"/>
    <property type="molecule type" value="Genomic_DNA"/>
</dbReference>
<dbReference type="EMBL" id="CP002688">
    <property type="protein sequence ID" value="AED96298.1"/>
    <property type="molecule type" value="Genomic_DNA"/>
</dbReference>
<dbReference type="EMBL" id="AY062686">
    <property type="protein sequence ID" value="AAL32764.1"/>
    <property type="molecule type" value="mRNA"/>
</dbReference>
<dbReference type="EMBL" id="BT008402">
    <property type="protein sequence ID" value="AAP37761.1"/>
    <property type="molecule type" value="mRNA"/>
</dbReference>
<dbReference type="RefSeq" id="NP_200118.3">
    <molecule id="Q8W4B1-1"/>
    <property type="nucleotide sequence ID" value="NM_124685.4"/>
</dbReference>
<dbReference type="SMR" id="Q8W4B1"/>
<dbReference type="FunCoup" id="Q8W4B1">
    <property type="interactions" value="2285"/>
</dbReference>
<dbReference type="IntAct" id="Q8W4B1">
    <property type="interactions" value="10"/>
</dbReference>
<dbReference type="STRING" id="3702.Q8W4B1"/>
<dbReference type="GlyGen" id="Q8W4B1">
    <property type="glycosylation" value="1 site"/>
</dbReference>
<dbReference type="iPTMnet" id="Q8W4B1"/>
<dbReference type="PaxDb" id="3702-AT5G53060.1"/>
<dbReference type="ProteomicsDB" id="225942">
    <molecule id="Q8W4B1-1"/>
</dbReference>
<dbReference type="EnsemblPlants" id="AT5G53060.1">
    <molecule id="Q8W4B1-1"/>
    <property type="protein sequence ID" value="AT5G53060.1"/>
    <property type="gene ID" value="AT5G53060"/>
</dbReference>
<dbReference type="GeneID" id="835386"/>
<dbReference type="Gramene" id="AT5G53060.1">
    <molecule id="Q8W4B1-1"/>
    <property type="protein sequence ID" value="AT5G53060.1"/>
    <property type="gene ID" value="AT5G53060"/>
</dbReference>
<dbReference type="KEGG" id="ath:AT5G53060"/>
<dbReference type="Araport" id="AT5G53060"/>
<dbReference type="TAIR" id="AT5G53060">
    <property type="gene designation" value="RCF3"/>
</dbReference>
<dbReference type="eggNOG" id="KOG2190">
    <property type="taxonomic scope" value="Eukaryota"/>
</dbReference>
<dbReference type="HOGENOM" id="CLU_018025_3_0_1"/>
<dbReference type="InParanoid" id="Q8W4B1"/>
<dbReference type="OMA" id="HRDRGHF"/>
<dbReference type="PhylomeDB" id="Q8W4B1"/>
<dbReference type="PRO" id="PR:Q8W4B1"/>
<dbReference type="Proteomes" id="UP000006548">
    <property type="component" value="Chromosome 5"/>
</dbReference>
<dbReference type="ExpressionAtlas" id="Q8W4B1">
    <property type="expression patterns" value="baseline and differential"/>
</dbReference>
<dbReference type="GO" id="GO:0010445">
    <property type="term" value="C:nuclear dicing body"/>
    <property type="evidence" value="ECO:0000314"/>
    <property type="project" value="TAIR"/>
</dbReference>
<dbReference type="GO" id="GO:0016607">
    <property type="term" value="C:nuclear speck"/>
    <property type="evidence" value="ECO:0007669"/>
    <property type="project" value="UniProtKB-SubCell"/>
</dbReference>
<dbReference type="GO" id="GO:0070878">
    <property type="term" value="F:primary miRNA binding"/>
    <property type="evidence" value="ECO:0000314"/>
    <property type="project" value="TAIR"/>
</dbReference>
<dbReference type="GO" id="GO:0010286">
    <property type="term" value="P:heat acclimation"/>
    <property type="evidence" value="ECO:0000315"/>
    <property type="project" value="TAIR"/>
</dbReference>
<dbReference type="GO" id="GO:0009867">
    <property type="term" value="P:jasmonic acid mediated signaling pathway"/>
    <property type="evidence" value="ECO:0000315"/>
    <property type="project" value="TAIR"/>
</dbReference>
<dbReference type="GO" id="GO:0006397">
    <property type="term" value="P:mRNA processing"/>
    <property type="evidence" value="ECO:0007669"/>
    <property type="project" value="UniProtKB-KW"/>
</dbReference>
<dbReference type="GO" id="GO:0031053">
    <property type="term" value="P:primary miRNA processing"/>
    <property type="evidence" value="ECO:0000315"/>
    <property type="project" value="TAIR"/>
</dbReference>
<dbReference type="GO" id="GO:1900150">
    <property type="term" value="P:regulation of defense response to fungus"/>
    <property type="evidence" value="ECO:0000315"/>
    <property type="project" value="TAIR"/>
</dbReference>
<dbReference type="GO" id="GO:0010468">
    <property type="term" value="P:regulation of gene expression"/>
    <property type="evidence" value="ECO:0000315"/>
    <property type="project" value="TAIR"/>
</dbReference>
<dbReference type="GO" id="GO:0006970">
    <property type="term" value="P:response to osmotic stress"/>
    <property type="evidence" value="ECO:0000315"/>
    <property type="project" value="TAIR"/>
</dbReference>
<dbReference type="GO" id="GO:0008380">
    <property type="term" value="P:RNA splicing"/>
    <property type="evidence" value="ECO:0007669"/>
    <property type="project" value="UniProtKB-KW"/>
</dbReference>
<dbReference type="CDD" id="cd22459">
    <property type="entry name" value="KH-I_PEPPER_rpt1_like"/>
    <property type="match status" value="2"/>
</dbReference>
<dbReference type="CDD" id="cd22460">
    <property type="entry name" value="KH-I_PEPPER_rpt2_like"/>
    <property type="match status" value="2"/>
</dbReference>
<dbReference type="CDD" id="cd22463">
    <property type="entry name" value="KH-I_RCF3_like_rpt5"/>
    <property type="match status" value="1"/>
</dbReference>
<dbReference type="FunFam" id="3.30.1370.10:FF:000096">
    <property type="entry name" value="KH domain-containing protein"/>
    <property type="match status" value="1"/>
</dbReference>
<dbReference type="FunFam" id="3.30.1370.10:FF:000116">
    <property type="entry name" value="RNA-binding KH domain-containing protein"/>
    <property type="match status" value="1"/>
</dbReference>
<dbReference type="FunFam" id="3.30.310.210:FF:000006">
    <property type="entry name" value="RNA-binding KH domain-containing protein"/>
    <property type="match status" value="1"/>
</dbReference>
<dbReference type="Gene3D" id="3.30.310.210">
    <property type="match status" value="1"/>
</dbReference>
<dbReference type="Gene3D" id="3.30.1370.10">
    <property type="entry name" value="K Homology domain, type 1"/>
    <property type="match status" value="3"/>
</dbReference>
<dbReference type="InterPro" id="IPR004087">
    <property type="entry name" value="KH_dom"/>
</dbReference>
<dbReference type="InterPro" id="IPR004088">
    <property type="entry name" value="KH_dom_type_1"/>
</dbReference>
<dbReference type="InterPro" id="IPR036612">
    <property type="entry name" value="KH_dom_type_1_sf"/>
</dbReference>
<dbReference type="PANTHER" id="PTHR10288">
    <property type="entry name" value="KH DOMAIN CONTAINING RNA BINDING PROTEIN"/>
    <property type="match status" value="1"/>
</dbReference>
<dbReference type="Pfam" id="PF00013">
    <property type="entry name" value="KH_1"/>
    <property type="match status" value="3"/>
</dbReference>
<dbReference type="SMART" id="SM00322">
    <property type="entry name" value="KH"/>
    <property type="match status" value="5"/>
</dbReference>
<dbReference type="SUPFAM" id="SSF54791">
    <property type="entry name" value="Eukaryotic type KH-domain (KH-domain type I)"/>
    <property type="match status" value="5"/>
</dbReference>
<dbReference type="PROSITE" id="PS50084">
    <property type="entry name" value="KH_TYPE_1"/>
    <property type="match status" value="4"/>
</dbReference>
<gene>
    <name evidence="11" type="primary">RCF3</name>
    <name evidence="14" type="synonym">ESR1</name>
    <name evidence="13" type="synonym">HOS5</name>
    <name evidence="12" type="synonym">SHI1</name>
    <name evidence="17" type="ordered locus">At5g53060</name>
    <name evidence="18" type="ORF">MNB8.12</name>
</gene>
<accession>Q8W4B1</accession>
<accession>Q9LVU6</accession>
<reference key="1">
    <citation type="journal article" date="2000" name="DNA Res.">
        <title>Structural analysis of Arabidopsis thaliana chromosome 5. X. Sequence features of the regions of 3,076,755 bp covered by sixty P1 and TAC clones.</title>
        <authorList>
            <person name="Sato S."/>
            <person name="Nakamura Y."/>
            <person name="Kaneko T."/>
            <person name="Katoh T."/>
            <person name="Asamizu E."/>
            <person name="Kotani H."/>
            <person name="Tabata S."/>
        </authorList>
    </citation>
    <scope>NUCLEOTIDE SEQUENCE [LARGE SCALE GENOMIC DNA]</scope>
    <source>
        <strain>cv. Columbia</strain>
    </source>
</reference>
<reference key="2">
    <citation type="journal article" date="2017" name="Plant J.">
        <title>Araport11: a complete reannotation of the Arabidopsis thaliana reference genome.</title>
        <authorList>
            <person name="Cheng C.Y."/>
            <person name="Krishnakumar V."/>
            <person name="Chan A.P."/>
            <person name="Thibaud-Nissen F."/>
            <person name="Schobel S."/>
            <person name="Town C.D."/>
        </authorList>
    </citation>
    <scope>GENOME REANNOTATION</scope>
    <source>
        <strain>cv. Columbia</strain>
    </source>
</reference>
<reference key="3">
    <citation type="journal article" date="2003" name="Science">
        <title>Empirical analysis of transcriptional activity in the Arabidopsis genome.</title>
        <authorList>
            <person name="Yamada K."/>
            <person name="Lim J."/>
            <person name="Dale J.M."/>
            <person name="Chen H."/>
            <person name="Shinn P."/>
            <person name="Palm C.J."/>
            <person name="Southwick A.M."/>
            <person name="Wu H.C."/>
            <person name="Kim C.J."/>
            <person name="Nguyen M."/>
            <person name="Pham P.K."/>
            <person name="Cheuk R.F."/>
            <person name="Karlin-Newmann G."/>
            <person name="Liu S.X."/>
            <person name="Lam B."/>
            <person name="Sakano H."/>
            <person name="Wu T."/>
            <person name="Yu G."/>
            <person name="Miranda M."/>
            <person name="Quach H.L."/>
            <person name="Tripp M."/>
            <person name="Chang C.H."/>
            <person name="Lee J.M."/>
            <person name="Toriumi M.J."/>
            <person name="Chan M.M."/>
            <person name="Tang C.C."/>
            <person name="Onodera C.S."/>
            <person name="Deng J.M."/>
            <person name="Akiyama K."/>
            <person name="Ansari Y."/>
            <person name="Arakawa T."/>
            <person name="Banh J."/>
            <person name="Banno F."/>
            <person name="Bowser L."/>
            <person name="Brooks S.Y."/>
            <person name="Carninci P."/>
            <person name="Chao Q."/>
            <person name="Choy N."/>
            <person name="Enju A."/>
            <person name="Goldsmith A.D."/>
            <person name="Gurjal M."/>
            <person name="Hansen N.F."/>
            <person name="Hayashizaki Y."/>
            <person name="Johnson-Hopson C."/>
            <person name="Hsuan V.W."/>
            <person name="Iida K."/>
            <person name="Karnes M."/>
            <person name="Khan S."/>
            <person name="Koesema E."/>
            <person name="Ishida J."/>
            <person name="Jiang P.X."/>
            <person name="Jones T."/>
            <person name="Kawai J."/>
            <person name="Kamiya A."/>
            <person name="Meyers C."/>
            <person name="Nakajima M."/>
            <person name="Narusaka M."/>
            <person name="Seki M."/>
            <person name="Sakurai T."/>
            <person name="Satou M."/>
            <person name="Tamse R."/>
            <person name="Vaysberg M."/>
            <person name="Wallender E.K."/>
            <person name="Wong C."/>
            <person name="Yamamura Y."/>
            <person name="Yuan S."/>
            <person name="Shinozaki K."/>
            <person name="Davis R.W."/>
            <person name="Theologis A."/>
            <person name="Ecker J.R."/>
        </authorList>
    </citation>
    <scope>NUCLEOTIDE SEQUENCE [LARGE SCALE MRNA]</scope>
    <source>
        <strain>cv. Columbia</strain>
    </source>
</reference>
<reference key="4">
    <citation type="journal article" date="1999" name="Plant J.">
        <title>HOS5-a negative regulator of osmotic stress-induced gene expression in Arabidopsis thaliana.</title>
        <authorList>
            <person name="Xiong L."/>
            <person name="Ishitani M."/>
            <person name="Lee H."/>
            <person name="Zhu J.K."/>
        </authorList>
    </citation>
    <scope>FUNCTION</scope>
</reference>
<reference key="5">
    <citation type="journal article" date="2013" name="Mol. Plant">
        <title>A KH domain-containing putative RNA-binding protein is critical for heat stress-responsive gene regulation and thermotolerance in Arabidopsis.</title>
        <authorList>
            <person name="Guan Q."/>
            <person name="Wen C."/>
            <person name="Zeng H."/>
            <person name="Zhu J."/>
        </authorList>
    </citation>
    <scope>FUNCTION</scope>
    <scope>SUBCELLULAR LOCATION</scope>
    <scope>INDUCTION</scope>
    <scope>DISRUPTION PHENOTYPE</scope>
</reference>
<reference key="6">
    <citation type="journal article" date="2013" name="PLoS Genet.">
        <title>The arabidopsis RNA binding protein with K homology motifs, SHINY1, interacts with the C-terminal domain phosphatase-like 1 (CPL1) to repress stress-inducible gene expression.</title>
        <authorList>
            <person name="Jiang J."/>
            <person name="Wang B."/>
            <person name="Shen Y."/>
            <person name="Wang H."/>
            <person name="Feng Q."/>
            <person name="Shi H."/>
        </authorList>
    </citation>
    <scope>FUNCTION</scope>
    <scope>INTERACTION WITH CPL1</scope>
    <scope>TISSUE SPECIFICITY</scope>
    <scope>INDUCTION</scope>
    <scope>MUTAGENESIS OF GLU-389</scope>
    <scope>DISRUPTION PHENOTYPE</scope>
</reference>
<reference key="7">
    <citation type="journal article" date="2013" name="PLoS Genet.">
        <title>A KH-domain RNA-binding protein interacts with FIERY2/CTD phosphatase-like 1 and splicing factors and is important for pre-mRNA splicing in Arabidopsis.</title>
        <authorList>
            <person name="Chen T."/>
            <person name="Cui P."/>
            <person name="Chen H."/>
            <person name="Ali S."/>
            <person name="Zhang S."/>
            <person name="Xiong L."/>
        </authorList>
    </citation>
    <scope>FUNCTION</scope>
    <scope>INTERACTION WITH CPL1; RS40 AND RS41</scope>
    <scope>SUBCELLULAR LOCATION</scope>
    <scope>TISSUE SPECIFICITY</scope>
    <scope>MUTAGENESIS OF GLY-233</scope>
    <scope>DISRUPTION PHENOTYPE</scope>
</reference>
<reference key="8">
    <citation type="journal article" date="2013" name="PLoS ONE">
        <title>Regulation of abiotic stress signalling by Arabidopsis C-terminal domain phosphatase-like 1 requires interaction with a k-homology domain-containing protein.</title>
        <authorList>
            <person name="Jeong I.S."/>
            <person name="Fukudome A."/>
            <person name="Aksoy E."/>
            <person name="Bang W.Y."/>
            <person name="Kim S."/>
            <person name="Guan Q."/>
            <person name="Bahk J.D."/>
            <person name="May K.A."/>
            <person name="Russell W.K."/>
            <person name="Zhu J."/>
            <person name="Koiwa H."/>
        </authorList>
    </citation>
    <scope>IDENTIFICATION BY MASS SPECTROMETRY</scope>
    <scope>INTERACTION WITH CPL1</scope>
    <scope>SUBCELLULAR LOCATION</scope>
</reference>
<reference key="9">
    <citation type="journal article" date="2015" name="Nucleic Acids Res.">
        <title>The RNA-binding protein HOS5 and serine/arginine-rich proteins RS40 and RS41 participate in miRNA biogenesis in Arabidopsis.</title>
        <authorList>
            <person name="Chen T."/>
            <person name="Cui P."/>
            <person name="Xiong L."/>
        </authorList>
    </citation>
    <scope>FUNCTION</scope>
    <scope>INTERACTION WITH DRB1/HYL1 AND SE</scope>
</reference>
<reference key="10">
    <citation type="journal article" date="2015" name="PLoS ONE">
        <title>The Arabidopsis KH-domain RNA-binding protein ESR1 functions in components of jasmonate signalling, unlinking growth restraint and resistance to stress.</title>
        <authorList>
            <person name="Thatcher L.F."/>
            <person name="Kamphuis L.G."/>
            <person name="Hane J.K."/>
            <person name="Onate-Sanchez L."/>
            <person name="Singh K.B."/>
        </authorList>
    </citation>
    <scope>FUNCTION</scope>
    <scope>DISRUPTION PHENOTYPE</scope>
</reference>
<reference key="11">
    <citation type="journal article" date="2015" name="Proc. Natl. Acad. Sci. U.S.A.">
        <title>KH domain protein RCF3 is a tissue-biased regulator of the plant miRNA biogenesis cofactor HYL1.</title>
        <authorList>
            <person name="Karlsson P."/>
            <person name="Christie M.D."/>
            <person name="Seymour D.K."/>
            <person name="Wang H."/>
            <person name="Wang X."/>
            <person name="Hagmann J."/>
            <person name="Kulcheski F."/>
            <person name="Manavella P.A."/>
        </authorList>
    </citation>
    <scope>FUNCTION</scope>
    <scope>INTERACTION WITH CPL1 AND CPL2</scope>
</reference>
<comment type="function">
    <text evidence="3 4 5 6 8 9 10">Acts as a negative regulator of osmotic stress-induced gene expression (PubMed:10504578). Involved in the regulation of thermotolerance responses under heat stress. Functions as an upstream regulator of heat stress transcription factor (HSF) genes. Negatively regulates HSFA1A, HSFA1B and HSFA1D, but positively controls the expression of HSFA1E, HSFA3, HSFA9, HSFB3, and DREB2C (PubMed:23087326). Forms a complex with CPL1 that modulates co-transcriptional processes such as mRNA capping and polyadenylation, and functions to repress stress-inducible gene expression (PubMed:23874224). Regulates pre-mRNA processing under salt stress (PubMed:24146632). Involved in primary miRNA processing and pri-miRNA biogenesis (PubMed:26227967, PubMed:26512101). Binds both intronless and intron-containing pri-miRNAs (PubMed:26227967). Acts as a regulator of biotic stress response gene expression and basal JA-mediated responses involved in defense. Acts as a negative regulator of resistance to the fungal pathogen Fusarium oxysporum (PubMed:25985302).</text>
</comment>
<comment type="subunit">
    <text evidence="5 6 7 9 10">Homodimer (PubMed:24146632). Interacts with CPL1 (PubMed:23874224, PubMed:24146632, PubMed:24303021, PubMed:26512101). Interacts with RS40 and RS41 (PubMed:24146632). Interacts with DRB1/HYL1 and SE (PubMed:26227967). Interacts with CPL2 (PubMed:26512101).</text>
</comment>
<comment type="subcellular location">
    <subcellularLocation>
        <location evidence="4 5 6 7">Nucleus</location>
    </subcellularLocation>
    <subcellularLocation>
        <location evidence="6">Nucleus speckle</location>
    </subcellularLocation>
    <text evidence="6">Localizes predominantly in nuclear speckles.</text>
</comment>
<comment type="alternative products">
    <event type="alternative splicing"/>
    <isoform>
        <id>Q8W4B1-1</id>
        <name>1</name>
        <sequence type="displayed"/>
    </isoform>
    <text evidence="15">A number of isoforms are produced. According to EST sequences.</text>
</comment>
<comment type="tissue specificity">
    <text evidence="5 6">Expressed in roots, cotyledons, leaves, flowers and siliques.</text>
</comment>
<comment type="induction">
    <text evidence="4 5">Transiently down-regulated by heat stress (PubMed:23087326). Down-regulated by salt stress, osmotic shock, treatment with lithium or abscisic acid (ABA), and low or high pH (PubMed:23874224).</text>
</comment>
<comment type="disruption phenotype">
    <text evidence="4 5 6 8">No visible phenotype under normal growth conditions (PubMed:23087326, PubMed:23874224, PubMed:24146632, PubMed:25985302). Mutant seedlings show increased tolerance to heat stress (PubMed:23087326, PubMed:25985302). Mutant seedlings show increased sensitivity to salt stress and abscisic acid (ABA) (PubMed:24146632). Mutant plants exhibit increased resistance to the fungal pathogen Fusarium oxysporum (PubMed:25985302).</text>
</comment>
<comment type="sequence caution" evidence="15">
    <conflict type="erroneous gene model prediction">
        <sequence resource="EMBL-CDS" id="BAA97146"/>
    </conflict>
</comment>
<evidence type="ECO:0000255" key="1">
    <source>
        <dbReference type="PROSITE-ProRule" id="PRU00117"/>
    </source>
</evidence>
<evidence type="ECO:0000256" key="2">
    <source>
        <dbReference type="SAM" id="MobiDB-lite"/>
    </source>
</evidence>
<evidence type="ECO:0000269" key="3">
    <source>
    </source>
</evidence>
<evidence type="ECO:0000269" key="4">
    <source>
    </source>
</evidence>
<evidence type="ECO:0000269" key="5">
    <source>
    </source>
</evidence>
<evidence type="ECO:0000269" key="6">
    <source>
    </source>
</evidence>
<evidence type="ECO:0000269" key="7">
    <source>
    </source>
</evidence>
<evidence type="ECO:0000269" key="8">
    <source>
    </source>
</evidence>
<evidence type="ECO:0000269" key="9">
    <source>
    </source>
</evidence>
<evidence type="ECO:0000269" key="10">
    <source>
    </source>
</evidence>
<evidence type="ECO:0000303" key="11">
    <source>
    </source>
</evidence>
<evidence type="ECO:0000303" key="12">
    <source>
    </source>
</evidence>
<evidence type="ECO:0000303" key="13">
    <source>
    </source>
</evidence>
<evidence type="ECO:0000303" key="14">
    <source>
    </source>
</evidence>
<evidence type="ECO:0000305" key="15"/>
<evidence type="ECO:0000305" key="16">
    <source>
    </source>
</evidence>
<evidence type="ECO:0000312" key="17">
    <source>
        <dbReference type="Araport" id="AT5G53060"/>
    </source>
</evidence>
<evidence type="ECO:0000312" key="18">
    <source>
        <dbReference type="EMBL" id="BAA97146.1"/>
    </source>
</evidence>